<organism>
    <name type="scientific">Oryza sativa subsp. japonica</name>
    <name type="common">Rice</name>
    <dbReference type="NCBI Taxonomy" id="39947"/>
    <lineage>
        <taxon>Eukaryota</taxon>
        <taxon>Viridiplantae</taxon>
        <taxon>Streptophyta</taxon>
        <taxon>Embryophyta</taxon>
        <taxon>Tracheophyta</taxon>
        <taxon>Spermatophyta</taxon>
        <taxon>Magnoliopsida</taxon>
        <taxon>Liliopsida</taxon>
        <taxon>Poales</taxon>
        <taxon>Poaceae</taxon>
        <taxon>BOP clade</taxon>
        <taxon>Oryzoideae</taxon>
        <taxon>Oryzeae</taxon>
        <taxon>Oryzinae</taxon>
        <taxon>Oryza</taxon>
        <taxon>Oryza sativa</taxon>
    </lineage>
</organism>
<name>YL1_ORYSJ</name>
<reference key="1">
    <citation type="journal article" date="2005" name="Nature">
        <title>The map-based sequence of the rice genome.</title>
        <authorList>
            <consortium name="International rice genome sequencing project (IRGSP)"/>
        </authorList>
    </citation>
    <scope>NUCLEOTIDE SEQUENCE [LARGE SCALE GENOMIC DNA]</scope>
    <source>
        <strain>cv. Nipponbare</strain>
    </source>
</reference>
<reference key="2">
    <citation type="journal article" date="2008" name="Nucleic Acids Res.">
        <title>The rice annotation project database (RAP-DB): 2008 update.</title>
        <authorList>
            <consortium name="The rice annotation project (RAP)"/>
        </authorList>
    </citation>
    <scope>GENOME REANNOTATION</scope>
    <source>
        <strain>cv. Nipponbare</strain>
    </source>
</reference>
<reference key="3">
    <citation type="journal article" date="2013" name="Rice">
        <title>Improvement of the Oryza sativa Nipponbare reference genome using next generation sequence and optical map data.</title>
        <authorList>
            <person name="Kawahara Y."/>
            <person name="de la Bastide M."/>
            <person name="Hamilton J.P."/>
            <person name="Kanamori H."/>
            <person name="McCombie W.R."/>
            <person name="Ouyang S."/>
            <person name="Schwartz D.C."/>
            <person name="Tanaka T."/>
            <person name="Wu J."/>
            <person name="Zhou S."/>
            <person name="Childs K.L."/>
            <person name="Davidson R.M."/>
            <person name="Lin H."/>
            <person name="Quesada-Ocampo L."/>
            <person name="Vaillancourt B."/>
            <person name="Sakai H."/>
            <person name="Lee S.S."/>
            <person name="Kim J."/>
            <person name="Numa H."/>
            <person name="Itoh T."/>
            <person name="Buell C.R."/>
            <person name="Matsumoto T."/>
        </authorList>
    </citation>
    <scope>GENOME REANNOTATION</scope>
    <source>
        <strain>cv. Nipponbare</strain>
    </source>
</reference>
<reference key="4">
    <citation type="journal article" date="2003" name="Science">
        <title>Collection, mapping, and annotation of over 28,000 cDNA clones from japonica rice.</title>
        <authorList>
            <consortium name="The rice full-length cDNA consortium"/>
        </authorList>
    </citation>
    <scope>NUCLEOTIDE SEQUENCE [LARGE SCALE MRNA]</scope>
    <source>
        <strain>cv. Nipponbare</strain>
    </source>
</reference>
<reference key="5">
    <citation type="journal article" date="2016" name="Sci. Rep.">
        <title>A nucleus-encoded chloroplast protein YL1 is involved in chloroplast development and efficient biogenesis of chloroplast ATP synthase in rice.</title>
        <authorList>
            <person name="Chen F."/>
            <person name="Dong G."/>
            <person name="Wu L."/>
            <person name="Wang F."/>
            <person name="Yang X."/>
            <person name="Ma X."/>
            <person name="Wang H."/>
            <person name="Wu J."/>
            <person name="Zhang Y."/>
            <person name="Wang H."/>
            <person name="Qian Q."/>
            <person name="Yu Y."/>
        </authorList>
    </citation>
    <scope>FUNCTION</scope>
    <scope>INTERACTION WITH ATPB</scope>
    <scope>SUBCELLULAR LOCATION</scope>
    <scope>TISSUE SPECIFICITY</scope>
    <scope>INDUCTION BY LIGHT</scope>
    <scope>DISRUPTION PHENOTYPE</scope>
    <scope>MUTAGENESIS OF PRO-108</scope>
</reference>
<evidence type="ECO:0000255" key="1"/>
<evidence type="ECO:0000256" key="2">
    <source>
        <dbReference type="SAM" id="MobiDB-lite"/>
    </source>
</evidence>
<evidence type="ECO:0000269" key="3">
    <source>
    </source>
</evidence>
<evidence type="ECO:0000303" key="4">
    <source>
    </source>
</evidence>
<evidence type="ECO:0000305" key="5"/>
<evidence type="ECO:0000312" key="6">
    <source>
        <dbReference type="EMBL" id="BAD38599.1"/>
    </source>
</evidence>
<evidence type="ECO:0000312" key="7">
    <source>
        <dbReference type="EMBL" id="BAF07836.1"/>
    </source>
</evidence>
<dbReference type="EMBL" id="AP007224">
    <property type="protein sequence ID" value="BAD38599.1"/>
    <property type="status" value="ALT_INIT"/>
    <property type="molecule type" value="Genomic_DNA"/>
</dbReference>
<dbReference type="EMBL" id="AP008208">
    <property type="protein sequence ID" value="BAF07836.1"/>
    <property type="molecule type" value="Genomic_DNA"/>
</dbReference>
<dbReference type="EMBL" id="AP014958">
    <property type="protein sequence ID" value="BAS77023.1"/>
    <property type="molecule type" value="Genomic_DNA"/>
</dbReference>
<dbReference type="EMBL" id="AK061136">
    <property type="protein sequence ID" value="BAG87753.1"/>
    <property type="molecule type" value="mRNA"/>
</dbReference>
<dbReference type="FunCoup" id="Q0E3V2">
    <property type="interactions" value="1"/>
</dbReference>
<dbReference type="PaxDb" id="39947-Q0E3V2"/>
<dbReference type="EnsemblPlants" id="Os02t0152900-01">
    <property type="protein sequence ID" value="Os02t0152900-01"/>
    <property type="gene ID" value="Os02g0152900"/>
</dbReference>
<dbReference type="Gramene" id="Os02t0152900-01">
    <property type="protein sequence ID" value="Os02t0152900-01"/>
    <property type="gene ID" value="Os02g0152900"/>
</dbReference>
<dbReference type="KEGG" id="dosa:Os02g0152900"/>
<dbReference type="KEGG" id="osa:4328331"/>
<dbReference type="eggNOG" id="ENOG502S1SV">
    <property type="taxonomic scope" value="Eukaryota"/>
</dbReference>
<dbReference type="HOGENOM" id="CLU_104365_1_0_1"/>
<dbReference type="InParanoid" id="Q0E3V2"/>
<dbReference type="OMA" id="QFIGYNI"/>
<dbReference type="OrthoDB" id="682865at2759"/>
<dbReference type="Proteomes" id="UP000000763">
    <property type="component" value="Chromosome 2"/>
</dbReference>
<dbReference type="Proteomes" id="UP000059680">
    <property type="component" value="Chromosome 2"/>
</dbReference>
<dbReference type="GO" id="GO:0009507">
    <property type="term" value="C:chloroplast"/>
    <property type="evidence" value="ECO:0000314"/>
    <property type="project" value="UniProtKB"/>
</dbReference>
<dbReference type="GO" id="GO:0009658">
    <property type="term" value="P:chloroplast organization"/>
    <property type="evidence" value="ECO:0000318"/>
    <property type="project" value="GO_Central"/>
</dbReference>
<dbReference type="GO" id="GO:0033614">
    <property type="term" value="P:chloroplast proton-transporting ATP synthase complex assembly"/>
    <property type="evidence" value="ECO:0000315"/>
    <property type="project" value="UniProtKB"/>
</dbReference>
<dbReference type="GO" id="GO:0010027">
    <property type="term" value="P:thylakoid membrane organization"/>
    <property type="evidence" value="ECO:0000315"/>
    <property type="project" value="UniProtKB"/>
</dbReference>
<dbReference type="InterPro" id="IPR040299">
    <property type="entry name" value="RF2K-like"/>
</dbReference>
<dbReference type="PANTHER" id="PTHR34938">
    <property type="entry name" value="PROTEIN FERTILITY RESTORER RF2, MITOCHONDRIAL"/>
    <property type="match status" value="1"/>
</dbReference>
<dbReference type="PANTHER" id="PTHR34938:SF3">
    <property type="entry name" value="PROTEIN YELLOW LEAF 1, CHOLOROPLASTIC"/>
    <property type="match status" value="1"/>
</dbReference>
<sequence>MPPLATMSSPGSLLLLTPAVYQGIGRNRGGQSQEGQSISSSRSLKTKLSVSARAVSSCEASMRITCCANQTQTARRKSFSGPTSPPSGSVKEKVRSPKLDDGGTGFPPFRFGGGGGGGGGGGSNSAGGFILFVIVLLLDYLREFERNLQNGTRRGSDYDNGLAPQ</sequence>
<protein>
    <recommendedName>
        <fullName evidence="4">Protein YELLOW LEAF 1, choloroplastic</fullName>
    </recommendedName>
</protein>
<proteinExistence type="evidence at protein level"/>
<gene>
    <name evidence="4" type="primary">YL1</name>
    <name evidence="7" type="ordered locus">Os02g0152900</name>
    <name evidence="5" type="ordered locus">LOC_Os02g05890</name>
    <name evidence="6" type="ORF">P0463E12.11</name>
</gene>
<keyword id="KW-0150">Chloroplast</keyword>
<keyword id="KW-0934">Plastid</keyword>
<keyword id="KW-1185">Reference proteome</keyword>
<keyword id="KW-0809">Transit peptide</keyword>
<feature type="transit peptide" description="Chloroplast" evidence="1">
    <location>
        <begin position="1"/>
        <end position="51"/>
    </location>
</feature>
<feature type="chain" id="PRO_0000445240" description="Protein YELLOW LEAF 1, choloroplastic">
    <location>
        <begin position="52"/>
        <end position="165"/>
    </location>
</feature>
<feature type="region of interest" description="Disordered" evidence="2">
    <location>
        <begin position="71"/>
        <end position="118"/>
    </location>
</feature>
<feature type="compositionally biased region" description="Low complexity" evidence="2">
    <location>
        <begin position="79"/>
        <end position="89"/>
    </location>
</feature>
<feature type="compositionally biased region" description="Basic and acidic residues" evidence="2">
    <location>
        <begin position="90"/>
        <end position="101"/>
    </location>
</feature>
<feature type="mutagenesis site" description="In yl1-1; yellow-leaf phenotype due to reduced chlorophyll content; abnormal chloroplast morphology, and decreased photochemical efficiency; early flowering and senescence; reduced plant height, tiller number, and grain weight." evidence="3">
    <original>P</original>
    <variation>S</variation>
    <location>
        <position position="108"/>
    </location>
</feature>
<comment type="function">
    <text evidence="3">Required for photosynthetic protein complex assembly in chloroplast thylakoid membranes during leaf development (PubMed:27585744). Maintains the abundance of the core protein complex PsaA-PsaB of photosystem I (PSI) in the thylakoid membrane (PubMed:27585744). May play a role in the efficient biogenesis of the chloroplast ATP synthase complex, possibly by interacting with the beta subunit atpB (PubMed:27585744).</text>
</comment>
<comment type="subunit">
    <text evidence="3">Interacts with atpB.</text>
</comment>
<comment type="subcellular location">
    <subcellularLocation>
        <location evidence="3">Plastid</location>
        <location evidence="3">Chloroplast</location>
    </subcellularLocation>
</comment>
<comment type="tissue specificity">
    <text evidence="3">Highly expressed in leaves (PubMed:27585744). Expressed in leaf sheaths (PubMed:27585744). Expressed at low levels in stems (PubMed:27585744).</text>
</comment>
<comment type="induction">
    <text evidence="3">Induced by light in dark-grown seedllings.</text>
</comment>
<comment type="disruption phenotype">
    <text evidence="3">Yellow-leaf phenotype due to reduced chlorophyll content.</text>
</comment>
<comment type="sequence caution" evidence="5">
    <conflict type="erroneous initiation">
        <sequence resource="EMBL-CDS" id="BAD38599"/>
    </conflict>
    <text>Truncated N-terminus.</text>
</comment>
<accession>Q0E3V2</accession>
<accession>Q67IU2</accession>